<comment type="function">
    <text evidence="4">Responsible for collagen binding by S.saprophyticus.</text>
</comment>
<comment type="subcellular location">
    <subcellularLocation>
        <location evidence="2">Secreted</location>
        <location evidence="2">Cell wall</location>
        <topology evidence="2">Peptidoglycan-anchor</topology>
    </subcellularLocation>
</comment>
<comment type="domain">
    <text>The amino acid composition of the SD repeat region is different from that of other SD repeats, containing a very high percentage of alanine residues.</text>
</comment>
<comment type="domain">
    <text>The ligand binding A region is specifically involved in collagen binding.</text>
</comment>
<comment type="similarity">
    <text evidence="5">Belongs to the serine-aspartate repeat-containing protein (SDr) family.</text>
</comment>
<evidence type="ECO:0000255" key="1"/>
<evidence type="ECO:0000255" key="2">
    <source>
        <dbReference type="PROSITE-ProRule" id="PRU00477"/>
    </source>
</evidence>
<evidence type="ECO:0000256" key="3">
    <source>
        <dbReference type="SAM" id="MobiDB-lite"/>
    </source>
</evidence>
<evidence type="ECO:0000269" key="4">
    <source>
    </source>
</evidence>
<evidence type="ECO:0000305" key="5"/>
<accession>Q8KWM1</accession>
<dbReference type="EMBL" id="AF402316">
    <property type="protein sequence ID" value="AAM90673.1"/>
    <property type="molecule type" value="Genomic_DNA"/>
</dbReference>
<dbReference type="SMR" id="Q8KWM1"/>
<dbReference type="GO" id="GO:0005576">
    <property type="term" value="C:extracellular region"/>
    <property type="evidence" value="ECO:0007669"/>
    <property type="project" value="UniProtKB-KW"/>
</dbReference>
<dbReference type="GO" id="GO:0007155">
    <property type="term" value="P:cell adhesion"/>
    <property type="evidence" value="ECO:0007669"/>
    <property type="project" value="InterPro"/>
</dbReference>
<dbReference type="Gene3D" id="2.60.40.1280">
    <property type="match status" value="1"/>
</dbReference>
<dbReference type="Gene3D" id="2.60.40.1290">
    <property type="match status" value="1"/>
</dbReference>
<dbReference type="Gene3D" id="2.60.40.10">
    <property type="entry name" value="Immunoglobulins"/>
    <property type="match status" value="2"/>
</dbReference>
<dbReference type="InterPro" id="IPR011266">
    <property type="entry name" value="Adhesin_Fg-bd_dom_2"/>
</dbReference>
<dbReference type="InterPro" id="IPR008966">
    <property type="entry name" value="Adhesion_dom_sf"/>
</dbReference>
<dbReference type="InterPro" id="IPR011252">
    <property type="entry name" value="Fibrogen-bd_dom1"/>
</dbReference>
<dbReference type="InterPro" id="IPR013783">
    <property type="entry name" value="Ig-like_fold"/>
</dbReference>
<dbReference type="InterPro" id="IPR019931">
    <property type="entry name" value="LPXTG_anchor"/>
</dbReference>
<dbReference type="InterPro" id="IPR050972">
    <property type="entry name" value="SDr-like"/>
</dbReference>
<dbReference type="InterPro" id="IPR033764">
    <property type="entry name" value="Sdr_B"/>
</dbReference>
<dbReference type="InterPro" id="IPR041171">
    <property type="entry name" value="SDR_Ig"/>
</dbReference>
<dbReference type="InterPro" id="IPR005877">
    <property type="entry name" value="YSIRK_signal_dom"/>
</dbReference>
<dbReference type="NCBIfam" id="TIGR01167">
    <property type="entry name" value="LPXTG_anchor"/>
    <property type="match status" value="1"/>
</dbReference>
<dbReference type="NCBIfam" id="TIGR01168">
    <property type="entry name" value="YSIRK_signal"/>
    <property type="match status" value="1"/>
</dbReference>
<dbReference type="PANTHER" id="PTHR34403">
    <property type="entry name" value="TOL-PAL SYSTEM PROTEIN TOLA"/>
    <property type="match status" value="1"/>
</dbReference>
<dbReference type="PANTHER" id="PTHR34403:SF8">
    <property type="entry name" value="TOL-PAL SYSTEM PROTEIN TOLA"/>
    <property type="match status" value="1"/>
</dbReference>
<dbReference type="Pfam" id="PF17961">
    <property type="entry name" value="Big_8"/>
    <property type="match status" value="1"/>
</dbReference>
<dbReference type="Pfam" id="PF00746">
    <property type="entry name" value="Gram_pos_anchor"/>
    <property type="match status" value="1"/>
</dbReference>
<dbReference type="Pfam" id="PF17210">
    <property type="entry name" value="SdrD_B"/>
    <property type="match status" value="2"/>
</dbReference>
<dbReference type="Pfam" id="PF10425">
    <property type="entry name" value="SdrG_C_C"/>
    <property type="match status" value="1"/>
</dbReference>
<dbReference type="Pfam" id="PF04650">
    <property type="entry name" value="YSIRK_signal"/>
    <property type="match status" value="1"/>
</dbReference>
<dbReference type="SUPFAM" id="SSF49401">
    <property type="entry name" value="Bacterial adhesins"/>
    <property type="match status" value="2"/>
</dbReference>
<dbReference type="SUPFAM" id="SSF117074">
    <property type="entry name" value="Hypothetical protein PA1324"/>
    <property type="match status" value="2"/>
</dbReference>
<dbReference type="PROSITE" id="PS50847">
    <property type="entry name" value="GRAM_POS_ANCHORING"/>
    <property type="match status" value="1"/>
</dbReference>
<keyword id="KW-0134">Cell wall</keyword>
<keyword id="KW-0572">Peptidoglycan-anchor</keyword>
<keyword id="KW-0677">Repeat</keyword>
<keyword id="KW-0964">Secreted</keyword>
<keyword id="KW-0732">Signal</keyword>
<name>SDRI_STASA</name>
<proteinExistence type="evidence at protein level"/>
<feature type="signal peptide" evidence="1">
    <location>
        <begin position="1"/>
        <end position="54"/>
    </location>
</feature>
<feature type="chain" id="PRO_0000305379" description="Serine-aspartate repeat-containing protein I">
    <location>
        <begin position="55"/>
        <end position="1857"/>
    </location>
</feature>
<feature type="propeptide" id="PRO_0000305380" description="Removed by sortase" evidence="2">
    <location>
        <begin position="1858"/>
        <end position="1893"/>
    </location>
</feature>
<feature type="repeat" description="1">
    <location>
        <begin position="72"/>
        <end position="83"/>
    </location>
</feature>
<feature type="repeat" description="2">
    <location>
        <begin position="84"/>
        <end position="95"/>
    </location>
</feature>
<feature type="repeat" description="3">
    <location>
        <begin position="96"/>
        <end position="107"/>
    </location>
</feature>
<feature type="repeat" description="4">
    <location>
        <begin position="108"/>
        <end position="119"/>
    </location>
</feature>
<feature type="repeat" description="5">
    <location>
        <begin position="120"/>
        <end position="131"/>
    </location>
</feature>
<feature type="repeat" description="6">
    <location>
        <begin position="132"/>
        <end position="143"/>
    </location>
</feature>
<feature type="repeat" description="7">
    <location>
        <begin position="144"/>
        <end position="155"/>
    </location>
</feature>
<feature type="repeat" description="8">
    <location>
        <begin position="156"/>
        <end position="167"/>
    </location>
</feature>
<feature type="repeat" description="9">
    <location>
        <begin position="168"/>
        <end position="179"/>
    </location>
</feature>
<feature type="repeat" description="10">
    <location>
        <begin position="180"/>
        <end position="191"/>
    </location>
</feature>
<feature type="repeat" description="11">
    <location>
        <begin position="192"/>
        <end position="203"/>
    </location>
</feature>
<feature type="repeat" description="12">
    <location>
        <begin position="204"/>
        <end position="215"/>
    </location>
</feature>
<feature type="repeat" description="13">
    <location>
        <begin position="216"/>
        <end position="227"/>
    </location>
</feature>
<feature type="repeat" description="14">
    <location>
        <begin position="228"/>
        <end position="239"/>
    </location>
</feature>
<feature type="repeat" description="15">
    <location>
        <begin position="240"/>
        <end position="251"/>
    </location>
</feature>
<feature type="repeat" description="16">
    <location>
        <begin position="252"/>
        <end position="263"/>
    </location>
</feature>
<feature type="repeat" description="17">
    <location>
        <begin position="264"/>
        <end position="275"/>
    </location>
</feature>
<feature type="repeat" description="18">
    <location>
        <begin position="276"/>
        <end position="287"/>
    </location>
</feature>
<feature type="repeat" description="19">
    <location>
        <begin position="288"/>
        <end position="299"/>
    </location>
</feature>
<feature type="repeat" description="20">
    <location>
        <begin position="300"/>
        <end position="311"/>
    </location>
</feature>
<feature type="repeat" description="21">
    <location>
        <begin position="312"/>
        <end position="323"/>
    </location>
</feature>
<feature type="domain" description="CNA-B 1">
    <location>
        <begin position="756"/>
        <end position="874"/>
    </location>
</feature>
<feature type="domain" description="CNA-B 2">
    <location>
        <begin position="875"/>
        <end position="984"/>
    </location>
</feature>
<feature type="region of interest" description="Disordered" evidence="3">
    <location>
        <begin position="53"/>
        <end position="333"/>
    </location>
</feature>
<feature type="region of interest" description="21 X 12 AA tandem repeat of [AP]-[AE]-T-K-E-[EK]-A-[AV]-[IT]-[AST]-E-E">
    <location>
        <begin position="72"/>
        <end position="323"/>
    </location>
</feature>
<feature type="region of interest" description="Ligand binding A region">
    <location>
        <begin position="324"/>
        <end position="755"/>
    </location>
</feature>
<feature type="region of interest" description="Disordered" evidence="3">
    <location>
        <begin position="941"/>
        <end position="1867"/>
    </location>
</feature>
<feature type="short sequence motif" description="LPXTG sorting signal" evidence="2">
    <location>
        <begin position="1854"/>
        <end position="1858"/>
    </location>
</feature>
<feature type="compositionally biased region" description="Basic and acidic residues" evidence="3">
    <location>
        <begin position="54"/>
        <end position="222"/>
    </location>
</feature>
<feature type="compositionally biased region" description="Basic and acidic residues" evidence="3">
    <location>
        <begin position="240"/>
        <end position="284"/>
    </location>
</feature>
<feature type="compositionally biased region" description="Acidic residues" evidence="3">
    <location>
        <begin position="286"/>
        <end position="302"/>
    </location>
</feature>
<feature type="compositionally biased region" description="Basic and acidic residues" evidence="3">
    <location>
        <begin position="312"/>
        <end position="325"/>
    </location>
</feature>
<feature type="compositionally biased region" description="Basic and acidic residues" evidence="3">
    <location>
        <begin position="955"/>
        <end position="975"/>
    </location>
</feature>
<feature type="compositionally biased region" description="Acidic residues" evidence="3">
    <location>
        <begin position="981"/>
        <end position="1836"/>
    </location>
</feature>
<feature type="compositionally biased region" description="Basic and acidic residues" evidence="3">
    <location>
        <begin position="1837"/>
        <end position="1851"/>
    </location>
</feature>
<feature type="modified residue" description="Pentaglycyl murein peptidoglycan amidated threonine" evidence="2">
    <location>
        <position position="1857"/>
    </location>
</feature>
<protein>
    <recommendedName>
        <fullName>Serine-aspartate repeat-containing protein I</fullName>
    </recommendedName>
</protein>
<gene>
    <name type="primary">sdrI</name>
</gene>
<organism>
    <name type="scientific">Staphylococcus saprophyticus</name>
    <dbReference type="NCBI Taxonomy" id="29385"/>
    <lineage>
        <taxon>Bacteria</taxon>
        <taxon>Bacillati</taxon>
        <taxon>Bacillota</taxon>
        <taxon>Bacilli</taxon>
        <taxon>Bacillales</taxon>
        <taxon>Staphylococcaceae</taxon>
        <taxon>Staphylococcus</taxon>
    </lineage>
</organism>
<sequence length="1893" mass="195068">MNFKGVKLLKNSKKRLDFLPNTLNKYSIRKFTVGTASILVGATLFLGVSNEAEAAEKIDSPTKEKVATTEEAATKEEAATTEEPATKEEAATTEEPATKEEAAIAEEPATKEEAATTEEPATKEEAAIAEEPATKEEAATTEEPATKEEAATTEEPATKEEAAIAEEPATKEEAATTEEPATKEEAAIAEEPATKEEAVTSEEAATKEKAAIAEEPATKEEAAIAEEPETKEEAATTEEPATKEEAAIAEEAATKEKAVTSEEAATKEKAAIAEEAATKEKAAIAEEPETKEEAATTEEPETKEEAAIAEEPATKEKAVTSEEAHGINNKNKQLLDMDKNSTIDEKFDYAKQAINELNINQKDISNIEASIKNNSDLKNLSKEELNNEILRAALVNESNNNDYGLQTLSAIEPLTTNVRNKNNSLSPVSRLKMLATATSGQNVNDKINITNASLTLNQKNNQHDDNTVWPTSNEQLRLSADYELDNSIKEGDTFTIKYGDYIRPGALELPAKNTQLRSKEGSIVANGVYDENTTTTTYTFTNYVDQYQNITGSFNLLATPKRETVTTDKQTYPMNVTIANQEVSENFVVDYGNHEDHLTNAAVVNVDNVNNQHNEVVYLNQSGDRIYDAKYFSIVQNGTFIPNEVKVYEVLDDNVLVDSFNPDLNGPAVKDVTSEFTPQYSLNNTRVDIDLNRSNMNKGSRYIITQAVKPSGTGNVNTTYELTRYGNEASRYPTGTKSTTVSYINGSSTAQGDNPTYNLGDYVWLDKNKDGIQNDDEKGISGVYVILKDSNNKELQRATTDDTGRYQFNNLQNGTYNVEFVIPNNYTPSPSNTIDNDTIDSDGQKDGDSNVVVAKGTINNADNMTVDTGFYETPKYSLGDYVWKDTNKDGVQDSDEKGIQGVTVTLKDKNGNVLKTTTTDENGSYRFDNLDSGDYIVHFEKPEGLTQTTTNSDSDENKDADGEEVHVTITDHDDFSIDNGYFDEDSDADADSDADADSDADADADADSDADADADADSDADSDADADADSDADADADADADSDSDADADADADADSDADADADSDADADADADSDADADADSDADSDADADADSDADADADADADSDADADSDADADADADADSDADADADADSDADADSDSDADADADADSDADADADADSDADADADSDADADADSDADADADSDADSDADADADSDADADADADADSDADADADSDADADADADADSDADSDADSDADSDADADADSDADADADADADSDADADSDADADSDADADADADADSDADADSDADADSDADADSDADADADADSDADADADADSDADADADSDSDADADADADSDADADADADSDADADSDADADSDADADADADSDADADSDADADADADSDADADADSDADADADADSDADADSDADADADADADSDADADADADSDADADADADADADSDADADADSDADADADSDADSDADADADSDADADADADSDADADSDADADSDADADSDADADADADSDADADSDADADSDADADADADSDADADSDADADADSDADADADSDADADSDADADADADADSDADADSDADSDADADADSDSDADADADADSDADADADADSDADADSDADADADSDSDADADADADSDADADSDADADADADSDADADADSDADADADSDADADADSDADSDADADADSDADADADADSDADADSDADADADADSDADADSDADADADADSDADADSDADADSDADADSDADADSDADADSDADADADADSDADADSDADADADADSDADADADSDADADADSDADADADSDADADADSDADADADSDADKYHNDTADKSNDNELPDTGNNTQNNGTLFGSLFAALGGLFLVGSRRKNKNNEEK</sequence>
<reference key="1">
    <citation type="journal article" date="2006" name="Infect. Immun.">
        <title>SdrI, a serine-aspartate repeat protein identified in Staphylococcus saprophyticus strain 7108, is a collagen-binding protein.</title>
        <authorList>
            <person name="Sakinc T."/>
            <person name="Kleine B."/>
            <person name="Gatermann S.G."/>
        </authorList>
    </citation>
    <scope>NUCLEOTIDE SEQUENCE [GENOMIC DNA]</scope>
    <scope>FUNCTION IN COLLAGEN BINDING</scope>
    <source>
        <strain>7108</strain>
    </source>
</reference>